<gene>
    <name evidence="1" type="primary">rplR</name>
    <name type="ordered locus">PSHAa2814</name>
</gene>
<reference key="1">
    <citation type="journal article" date="2005" name="Genome Res.">
        <title>Coping with cold: the genome of the versatile marine Antarctica bacterium Pseudoalteromonas haloplanktis TAC125.</title>
        <authorList>
            <person name="Medigue C."/>
            <person name="Krin E."/>
            <person name="Pascal G."/>
            <person name="Barbe V."/>
            <person name="Bernsel A."/>
            <person name="Bertin P.N."/>
            <person name="Cheung F."/>
            <person name="Cruveiller S."/>
            <person name="D'Amico S."/>
            <person name="Duilio A."/>
            <person name="Fang G."/>
            <person name="Feller G."/>
            <person name="Ho C."/>
            <person name="Mangenot S."/>
            <person name="Marino G."/>
            <person name="Nilsson J."/>
            <person name="Parrilli E."/>
            <person name="Rocha E.P.C."/>
            <person name="Rouy Z."/>
            <person name="Sekowska A."/>
            <person name="Tutino M.L."/>
            <person name="Vallenet D."/>
            <person name="von Heijne G."/>
            <person name="Danchin A."/>
        </authorList>
    </citation>
    <scope>NUCLEOTIDE SEQUENCE [LARGE SCALE GENOMIC DNA]</scope>
    <source>
        <strain>TAC 125</strain>
    </source>
</reference>
<comment type="function">
    <text evidence="1">This is one of the proteins that bind and probably mediate the attachment of the 5S RNA into the large ribosomal subunit, where it forms part of the central protuberance.</text>
</comment>
<comment type="subunit">
    <text evidence="1">Part of the 50S ribosomal subunit; part of the 5S rRNA/L5/L18/L25 subcomplex. Contacts the 5S and 23S rRNAs.</text>
</comment>
<comment type="similarity">
    <text evidence="1">Belongs to the universal ribosomal protein uL18 family.</text>
</comment>
<keyword id="KW-1185">Reference proteome</keyword>
<keyword id="KW-0687">Ribonucleoprotein</keyword>
<keyword id="KW-0689">Ribosomal protein</keyword>
<keyword id="KW-0694">RNA-binding</keyword>
<keyword id="KW-0699">rRNA-binding</keyword>
<feature type="chain" id="PRO_0000251344" description="Large ribosomal subunit protein uL18">
    <location>
        <begin position="1"/>
        <end position="116"/>
    </location>
</feature>
<organism>
    <name type="scientific">Pseudoalteromonas translucida (strain TAC 125)</name>
    <dbReference type="NCBI Taxonomy" id="326442"/>
    <lineage>
        <taxon>Bacteria</taxon>
        <taxon>Pseudomonadati</taxon>
        <taxon>Pseudomonadota</taxon>
        <taxon>Gammaproteobacteria</taxon>
        <taxon>Alteromonadales</taxon>
        <taxon>Pseudoalteromonadaceae</taxon>
        <taxon>Pseudoalteromonas</taxon>
    </lineage>
</organism>
<dbReference type="EMBL" id="CR954246">
    <property type="protein sequence ID" value="CAI87851.1"/>
    <property type="molecule type" value="Genomic_DNA"/>
</dbReference>
<dbReference type="SMR" id="Q3IJK1"/>
<dbReference type="STRING" id="326442.PSHAa2814"/>
<dbReference type="KEGG" id="pha:PSHAa2814"/>
<dbReference type="eggNOG" id="COG0256">
    <property type="taxonomic scope" value="Bacteria"/>
</dbReference>
<dbReference type="HOGENOM" id="CLU_098841_0_1_6"/>
<dbReference type="BioCyc" id="PHAL326442:PSHA_RS13815-MONOMER"/>
<dbReference type="Proteomes" id="UP000006843">
    <property type="component" value="Chromosome I"/>
</dbReference>
<dbReference type="GO" id="GO:0022625">
    <property type="term" value="C:cytosolic large ribosomal subunit"/>
    <property type="evidence" value="ECO:0007669"/>
    <property type="project" value="TreeGrafter"/>
</dbReference>
<dbReference type="GO" id="GO:0008097">
    <property type="term" value="F:5S rRNA binding"/>
    <property type="evidence" value="ECO:0007669"/>
    <property type="project" value="TreeGrafter"/>
</dbReference>
<dbReference type="GO" id="GO:0003735">
    <property type="term" value="F:structural constituent of ribosome"/>
    <property type="evidence" value="ECO:0007669"/>
    <property type="project" value="InterPro"/>
</dbReference>
<dbReference type="GO" id="GO:0006412">
    <property type="term" value="P:translation"/>
    <property type="evidence" value="ECO:0007669"/>
    <property type="project" value="UniProtKB-UniRule"/>
</dbReference>
<dbReference type="CDD" id="cd00432">
    <property type="entry name" value="Ribosomal_L18_L5e"/>
    <property type="match status" value="1"/>
</dbReference>
<dbReference type="FunFam" id="3.30.420.100:FF:000001">
    <property type="entry name" value="50S ribosomal protein L18"/>
    <property type="match status" value="1"/>
</dbReference>
<dbReference type="Gene3D" id="3.30.420.100">
    <property type="match status" value="1"/>
</dbReference>
<dbReference type="HAMAP" id="MF_01337_B">
    <property type="entry name" value="Ribosomal_uL18_B"/>
    <property type="match status" value="1"/>
</dbReference>
<dbReference type="InterPro" id="IPR004389">
    <property type="entry name" value="Ribosomal_uL18_bac-type"/>
</dbReference>
<dbReference type="InterPro" id="IPR005484">
    <property type="entry name" value="Ribosomal_uL18_bac/euk"/>
</dbReference>
<dbReference type="NCBIfam" id="TIGR00060">
    <property type="entry name" value="L18_bact"/>
    <property type="match status" value="1"/>
</dbReference>
<dbReference type="PANTHER" id="PTHR12899">
    <property type="entry name" value="39S RIBOSOMAL PROTEIN L18, MITOCHONDRIAL"/>
    <property type="match status" value="1"/>
</dbReference>
<dbReference type="PANTHER" id="PTHR12899:SF3">
    <property type="entry name" value="LARGE RIBOSOMAL SUBUNIT PROTEIN UL18M"/>
    <property type="match status" value="1"/>
</dbReference>
<dbReference type="Pfam" id="PF00861">
    <property type="entry name" value="Ribosomal_L18p"/>
    <property type="match status" value="1"/>
</dbReference>
<dbReference type="SUPFAM" id="SSF53137">
    <property type="entry name" value="Translational machinery components"/>
    <property type="match status" value="1"/>
</dbReference>
<sequence>MDKKTARLRRAKRTRRNYIEQGTTRLVIHRTPRHIYAQVVTAEGTVLAAASTVEKAICETVKGTGNVAAAQAVGKAVAERAADKGIEKIAFDRSGFKYHGRVKALADAAREAGLQF</sequence>
<name>RL18_PSET1</name>
<evidence type="ECO:0000255" key="1">
    <source>
        <dbReference type="HAMAP-Rule" id="MF_01337"/>
    </source>
</evidence>
<evidence type="ECO:0000305" key="2"/>
<accession>Q3IJK1</accession>
<protein>
    <recommendedName>
        <fullName evidence="1">Large ribosomal subunit protein uL18</fullName>
    </recommendedName>
    <alternativeName>
        <fullName evidence="2">50S ribosomal protein L18</fullName>
    </alternativeName>
</protein>
<proteinExistence type="inferred from homology"/>